<keyword id="KW-1015">Disulfide bond</keyword>
<keyword id="KW-0274">FAD</keyword>
<keyword id="KW-0285">Flavoprotein</keyword>
<keyword id="KW-0472">Membrane</keyword>
<keyword id="KW-0560">Oxidoreductase</keyword>
<keyword id="KW-1185">Reference proteome</keyword>
<keyword id="KW-0812">Transmembrane</keyword>
<keyword id="KW-1133">Transmembrane helix</keyword>
<sequence>MSIDPKLWGNAFWSTLHHVAAGYNDHPSLGARQVMTNFIQSIPVLLPCAECQDHAFDYIGRADLDRVVSSRRQLFLFFFNFHNHVNARLNKPQLAAKTVFQRYRVPFDGEAAAATTEPPFHWSPWLTTALAVILVVVVAGIGHRSRFK</sequence>
<gene>
    <name type="ORF">IIV3-096R</name>
</gene>
<feature type="chain" id="PRO_0000377497" description="Putative FAD-linked sulfhydryl oxidase 096R">
    <location>
        <begin position="1"/>
        <end position="148"/>
    </location>
</feature>
<feature type="transmembrane region" description="Helical" evidence="1">
    <location>
        <begin position="122"/>
        <end position="142"/>
    </location>
</feature>
<feature type="domain" description="ERV/ALR sulfhydryl oxidase" evidence="2">
    <location>
        <begin position="1"/>
        <end position="103"/>
    </location>
</feature>
<feature type="disulfide bond" description="Redox-active" evidence="2">
    <location>
        <begin position="48"/>
        <end position="51"/>
    </location>
</feature>
<protein>
    <recommendedName>
        <fullName>Putative FAD-linked sulfhydryl oxidase 096R</fullName>
        <ecNumber>1.8.3.2</ecNumber>
    </recommendedName>
</protein>
<dbReference type="EC" id="1.8.3.2"/>
<dbReference type="EMBL" id="DQ643392">
    <property type="protein sequence ID" value="ABF82126.1"/>
    <property type="molecule type" value="Genomic_DNA"/>
</dbReference>
<dbReference type="RefSeq" id="YP_654668.1">
    <property type="nucleotide sequence ID" value="NC_008187.1"/>
</dbReference>
<dbReference type="SMR" id="Q196W4"/>
<dbReference type="KEGG" id="vg:4156240"/>
<dbReference type="OrthoDB" id="14873at10239"/>
<dbReference type="Proteomes" id="UP000001358">
    <property type="component" value="Genome"/>
</dbReference>
<dbReference type="GO" id="GO:0016020">
    <property type="term" value="C:membrane"/>
    <property type="evidence" value="ECO:0007669"/>
    <property type="project" value="UniProtKB-SubCell"/>
</dbReference>
<dbReference type="GO" id="GO:0050660">
    <property type="term" value="F:flavin adenine dinucleotide binding"/>
    <property type="evidence" value="ECO:0007669"/>
    <property type="project" value="TreeGrafter"/>
</dbReference>
<dbReference type="GO" id="GO:0016971">
    <property type="term" value="F:flavin-dependent sulfhydryl oxidase activity"/>
    <property type="evidence" value="ECO:0007669"/>
    <property type="project" value="InterPro"/>
</dbReference>
<dbReference type="Gene3D" id="1.20.120.310">
    <property type="entry name" value="ERV/ALR sulfhydryl oxidase domain"/>
    <property type="match status" value="1"/>
</dbReference>
<dbReference type="InterPro" id="IPR039799">
    <property type="entry name" value="ALR/ERV"/>
</dbReference>
<dbReference type="InterPro" id="IPR036774">
    <property type="entry name" value="ERV/ALR_sulphydryl_oxid_sf"/>
</dbReference>
<dbReference type="InterPro" id="IPR017905">
    <property type="entry name" value="ERV/ALR_sulphydryl_oxidase"/>
</dbReference>
<dbReference type="PANTHER" id="PTHR12645">
    <property type="entry name" value="ALR/ERV"/>
    <property type="match status" value="1"/>
</dbReference>
<dbReference type="PANTHER" id="PTHR12645:SF0">
    <property type="entry name" value="FAD-LINKED SULFHYDRYL OXIDASE ALR"/>
    <property type="match status" value="1"/>
</dbReference>
<dbReference type="Pfam" id="PF04777">
    <property type="entry name" value="Evr1_Alr"/>
    <property type="match status" value="1"/>
</dbReference>
<dbReference type="SUPFAM" id="SSF69000">
    <property type="entry name" value="FAD-dependent thiol oxidase"/>
    <property type="match status" value="1"/>
</dbReference>
<dbReference type="PROSITE" id="PS51324">
    <property type="entry name" value="ERV_ALR"/>
    <property type="match status" value="1"/>
</dbReference>
<organismHost>
    <name type="scientific">Aedes vexans</name>
    <name type="common">Inland floodwater mosquito</name>
    <name type="synonym">Culex vexans</name>
    <dbReference type="NCBI Taxonomy" id="7163"/>
</organismHost>
<organismHost>
    <name type="scientific">Culex territans</name>
    <dbReference type="NCBI Taxonomy" id="42431"/>
</organismHost>
<organismHost>
    <name type="scientific">Culiseta annulata</name>
    <dbReference type="NCBI Taxonomy" id="332058"/>
</organismHost>
<organismHost>
    <name type="scientific">Ochlerotatus sollicitans</name>
    <name type="common">eastern saltmarsh mosquito</name>
    <dbReference type="NCBI Taxonomy" id="310513"/>
</organismHost>
<organismHost>
    <name type="scientific">Ochlerotatus taeniorhynchus</name>
    <name type="common">Black salt marsh mosquito</name>
    <name type="synonym">Aedes taeniorhynchus</name>
    <dbReference type="NCBI Taxonomy" id="329105"/>
</organismHost>
<organismHost>
    <name type="scientific">Psorophora ferox</name>
    <dbReference type="NCBI Taxonomy" id="7183"/>
</organismHost>
<name>VF347_IIV3</name>
<comment type="function">
    <text evidence="2">FAD-dependent sulfhydryl oxidase that catalyzes disulfide bond formation.</text>
</comment>
<comment type="catalytic activity">
    <reaction>
        <text>2 R'C(R)SH + O2 = R'C(R)S-S(R)CR' + H2O2</text>
        <dbReference type="Rhea" id="RHEA:17357"/>
        <dbReference type="ChEBI" id="CHEBI:15379"/>
        <dbReference type="ChEBI" id="CHEBI:16240"/>
        <dbReference type="ChEBI" id="CHEBI:16520"/>
        <dbReference type="ChEBI" id="CHEBI:17412"/>
        <dbReference type="EC" id="1.8.3.2"/>
    </reaction>
</comment>
<comment type="cofactor">
    <cofactor evidence="2">
        <name>FAD</name>
        <dbReference type="ChEBI" id="CHEBI:57692"/>
    </cofactor>
</comment>
<comment type="subcellular location">
    <subcellularLocation>
        <location evidence="3">Membrane</location>
        <topology evidence="3">Single-pass membrane protein</topology>
    </subcellularLocation>
</comment>
<comment type="similarity">
    <text evidence="3">Belongs to the IIV-6 347L family.</text>
</comment>
<accession>Q196W4</accession>
<evidence type="ECO:0000255" key="1"/>
<evidence type="ECO:0000255" key="2">
    <source>
        <dbReference type="PROSITE-ProRule" id="PRU00654"/>
    </source>
</evidence>
<evidence type="ECO:0000305" key="3"/>
<reference key="1">
    <citation type="journal article" date="2006" name="J. Virol.">
        <title>Genome of invertebrate iridescent virus type 3 (mosquito iridescent virus).</title>
        <authorList>
            <person name="Delhon G."/>
            <person name="Tulman E.R."/>
            <person name="Afonso C.L."/>
            <person name="Lu Z."/>
            <person name="Becnel J.J."/>
            <person name="Moser B.A."/>
            <person name="Kutish G.F."/>
            <person name="Rock D.L."/>
        </authorList>
    </citation>
    <scope>NUCLEOTIDE SEQUENCE [LARGE SCALE GENOMIC DNA]</scope>
</reference>
<organism>
    <name type="scientific">Invertebrate iridescent virus 3</name>
    <name type="common">IIV-3</name>
    <name type="synonym">Mosquito iridescent virus</name>
    <dbReference type="NCBI Taxonomy" id="345201"/>
    <lineage>
        <taxon>Viruses</taxon>
        <taxon>Varidnaviria</taxon>
        <taxon>Bamfordvirae</taxon>
        <taxon>Nucleocytoviricota</taxon>
        <taxon>Megaviricetes</taxon>
        <taxon>Pimascovirales</taxon>
        <taxon>Iridoviridae</taxon>
        <taxon>Betairidovirinae</taxon>
        <taxon>Chloriridovirus</taxon>
    </lineage>
</organism>
<proteinExistence type="inferred from homology"/>